<accession>P44947</accession>
<protein>
    <recommendedName>
        <fullName>Serine endoprotease DegS</fullName>
        <ecNumber>3.4.21.107</ecNumber>
    </recommendedName>
    <alternativeName>
        <fullName>Site-1 protease DegS</fullName>
        <shortName>S1P protease DegS</shortName>
    </alternativeName>
    <alternativeName>
        <fullName>Site-1-type intramembrane protease</fullName>
    </alternativeName>
</protein>
<organism>
    <name type="scientific">Haemophilus influenzae (strain ATCC 51907 / DSM 11121 / KW20 / Rd)</name>
    <dbReference type="NCBI Taxonomy" id="71421"/>
    <lineage>
        <taxon>Bacteria</taxon>
        <taxon>Pseudomonadati</taxon>
        <taxon>Pseudomonadota</taxon>
        <taxon>Gammaproteobacteria</taxon>
        <taxon>Pasteurellales</taxon>
        <taxon>Pasteurellaceae</taxon>
        <taxon>Haemophilus</taxon>
    </lineage>
</organism>
<comment type="function">
    <text evidence="1">A site-1 protease (S1P) that cleaves the peptide bond between 'Val-148' and 'Ser-149' in RseA. Part of a regulated intramembrane proteolysis (RIP) cascade. When heat shock or other environmental stresses disrupt protein folding in the periplasm, DegS senses the accumulation of unassembled outer membrane porins (OMP) and then initiates RseA (anti sigma-E factor) degradation by cleaving its periplasmic domain, making it a substrate for subsequent cleavage by RseP. This cascade ultimately leads to the sigma-E-driven expression of a variety of factors dealing with folding stress in the periplasm and OMP assembly. Required for basal and stress-induced degradation of RseA (By similarity).</text>
</comment>
<comment type="catalytic activity">
    <reaction>
        <text>Acts on substrates that are at least partially unfolded. The cleavage site P1 residue is normally between a pair of hydrophobic residues, such as Val-|-Val.</text>
        <dbReference type="EC" id="3.4.21.107"/>
    </reaction>
</comment>
<comment type="activity regulation">
    <text>Allosterically activated by the C-terminus of exposed OMP peptides (consensus Tyr-X-Phe-COOH); cleavage only occurs in the presence of peptides. Inhibited when RseB is bound to RseA.</text>
</comment>
<comment type="subunit">
    <text evidence="1">Homotrimer.</text>
</comment>
<comment type="subcellular location">
    <subcellularLocation>
        <location evidence="5">Cell inner membrane</location>
        <topology evidence="5">Single-pass membrane protein</topology>
    </subcellularLocation>
</comment>
<comment type="domain">
    <text evidence="1">The PDZ domain probably binds peptides ending with C-terminal Tyr-X-Phe sequences, which activates proteolysis. In the absence of OMP peptides the PDZ domain inhibits peptidase activity (By similarity).</text>
</comment>
<comment type="miscellaneous">
    <text evidence="1">Regulated intramembrane proteolysis (RIP) occurs when an extracytoplasmic signal triggers a concerted proteolytic cascade to transmit information and elicit cellular responses. A membrane-spanning regulatory substrate protein is first cut extracytoplasmically (site-1 protease, S1P, this enzyme), then within the membrane itself (site-2 protease, S2P), while cytoplasmic proteases finish degrading the regulatory protein, liberating the effector protein (By similarity).</text>
</comment>
<comment type="similarity">
    <text evidence="5">Belongs to the peptidase S1C family.</text>
</comment>
<sequence length="340" mass="36039">MLKKLFHSALWGLAAAGVILFAVPRLNNSNIFTSDDIISFKNAVRIASPAVVNVYNRSFSSASINDNDQLQVNNLGSGVIMSKDGYILTNKHLIQNADQIVVALQNGNIFEASLVGSDDLTDLAVLKIRADNLSTIPQNSARQAHVGDVVLAIGNPYNLGQSVSQGIISAIGRNAVGDSVGRQNFIQTDASINRGNSGGALINSAGELVGISTLSIGKTANEIAEGLNFAIPIDIANDVLRKIMRDGRVIRGYFGVQSDISSSSEEGIVITDVSPNSPAAKSGIQVGDVILKLNNQEGISAREMMQIIANTKPNSKVLVTILRLGKILQIPVVIEEFPVN</sequence>
<gene>
    <name type="primary">degS</name>
    <name type="synonym">hhoB</name>
    <name type="synonym">htrH</name>
    <name type="ordered locus">HI_0945</name>
</gene>
<keyword id="KW-0997">Cell inner membrane</keyword>
<keyword id="KW-1003">Cell membrane</keyword>
<keyword id="KW-0378">Hydrolase</keyword>
<keyword id="KW-0472">Membrane</keyword>
<keyword id="KW-0645">Protease</keyword>
<keyword id="KW-1185">Reference proteome</keyword>
<keyword id="KW-0720">Serine protease</keyword>
<keyword id="KW-0812">Transmembrane</keyword>
<keyword id="KW-1133">Transmembrane helix</keyword>
<evidence type="ECO:0000250" key="1"/>
<evidence type="ECO:0000250" key="2">
    <source>
        <dbReference type="UniProtKB" id="P0AEE4"/>
    </source>
</evidence>
<evidence type="ECO:0000255" key="3"/>
<evidence type="ECO:0000255" key="4">
    <source>
        <dbReference type="PROSITE-ProRule" id="PRU00143"/>
    </source>
</evidence>
<evidence type="ECO:0000305" key="5"/>
<dbReference type="EC" id="3.4.21.107"/>
<dbReference type="EMBL" id="L42023">
    <property type="protein sequence ID" value="AAC22599.1"/>
    <property type="molecule type" value="Genomic_DNA"/>
</dbReference>
<dbReference type="PIR" id="I64103">
    <property type="entry name" value="I64103"/>
</dbReference>
<dbReference type="RefSeq" id="NP_439105.1">
    <property type="nucleotide sequence ID" value="NC_000907.1"/>
</dbReference>
<dbReference type="SMR" id="P44947"/>
<dbReference type="STRING" id="71421.HI_0945"/>
<dbReference type="MEROPS" id="S01.275"/>
<dbReference type="EnsemblBacteria" id="AAC22599">
    <property type="protein sequence ID" value="AAC22599"/>
    <property type="gene ID" value="HI_0945"/>
</dbReference>
<dbReference type="KEGG" id="hin:HI_0945"/>
<dbReference type="PATRIC" id="fig|71421.8.peg.986"/>
<dbReference type="eggNOG" id="COG0265">
    <property type="taxonomic scope" value="Bacteria"/>
</dbReference>
<dbReference type="HOGENOM" id="CLU_020120_2_2_6"/>
<dbReference type="OrthoDB" id="9758917at2"/>
<dbReference type="PhylomeDB" id="P44947"/>
<dbReference type="BioCyc" id="HINF71421:G1GJ1-985-MONOMER"/>
<dbReference type="Proteomes" id="UP000000579">
    <property type="component" value="Chromosome"/>
</dbReference>
<dbReference type="GO" id="GO:0005886">
    <property type="term" value="C:plasma membrane"/>
    <property type="evidence" value="ECO:0000250"/>
    <property type="project" value="UniProtKB"/>
</dbReference>
<dbReference type="GO" id="GO:0004252">
    <property type="term" value="F:serine-type endopeptidase activity"/>
    <property type="evidence" value="ECO:0000250"/>
    <property type="project" value="UniProtKB"/>
</dbReference>
<dbReference type="GO" id="GO:0071218">
    <property type="term" value="P:cellular response to misfolded protein"/>
    <property type="evidence" value="ECO:0000250"/>
    <property type="project" value="UniProtKB"/>
</dbReference>
<dbReference type="GO" id="GO:0006508">
    <property type="term" value="P:proteolysis"/>
    <property type="evidence" value="ECO:0007669"/>
    <property type="project" value="UniProtKB-KW"/>
</dbReference>
<dbReference type="FunFam" id="2.40.10.10:FF:000001">
    <property type="entry name" value="Periplasmic serine protease DegS"/>
    <property type="match status" value="1"/>
</dbReference>
<dbReference type="FunFam" id="2.40.10.10:FF:000009">
    <property type="entry name" value="Serine endoprotease DegS, periplasmic"/>
    <property type="match status" value="1"/>
</dbReference>
<dbReference type="Gene3D" id="2.30.42.10">
    <property type="match status" value="1"/>
</dbReference>
<dbReference type="Gene3D" id="2.40.10.10">
    <property type="entry name" value="Trypsin-like serine proteases"/>
    <property type="match status" value="2"/>
</dbReference>
<dbReference type="InterPro" id="IPR051201">
    <property type="entry name" value="Chloro_Bact_Ser_Proteases"/>
</dbReference>
<dbReference type="InterPro" id="IPR001478">
    <property type="entry name" value="PDZ"/>
</dbReference>
<dbReference type="InterPro" id="IPR036034">
    <property type="entry name" value="PDZ_sf"/>
</dbReference>
<dbReference type="InterPro" id="IPR011783">
    <property type="entry name" value="Pept_S1C_DegS"/>
</dbReference>
<dbReference type="InterPro" id="IPR009003">
    <property type="entry name" value="Peptidase_S1_PA"/>
</dbReference>
<dbReference type="InterPro" id="IPR043504">
    <property type="entry name" value="Peptidase_S1_PA_chymotrypsin"/>
</dbReference>
<dbReference type="InterPro" id="IPR001940">
    <property type="entry name" value="Peptidase_S1C"/>
</dbReference>
<dbReference type="NCBIfam" id="NF008147">
    <property type="entry name" value="PRK10898.1"/>
    <property type="match status" value="1"/>
</dbReference>
<dbReference type="NCBIfam" id="TIGR02038">
    <property type="entry name" value="protease_degS"/>
    <property type="match status" value="1"/>
</dbReference>
<dbReference type="PANTHER" id="PTHR43343">
    <property type="entry name" value="PEPTIDASE S12"/>
    <property type="match status" value="1"/>
</dbReference>
<dbReference type="PANTHER" id="PTHR43343:SF3">
    <property type="entry name" value="PROTEASE DO-LIKE 8, CHLOROPLASTIC"/>
    <property type="match status" value="1"/>
</dbReference>
<dbReference type="Pfam" id="PF00595">
    <property type="entry name" value="PDZ"/>
    <property type="match status" value="1"/>
</dbReference>
<dbReference type="Pfam" id="PF13365">
    <property type="entry name" value="Trypsin_2"/>
    <property type="match status" value="1"/>
</dbReference>
<dbReference type="PRINTS" id="PR00834">
    <property type="entry name" value="PROTEASES2C"/>
</dbReference>
<dbReference type="SMART" id="SM00228">
    <property type="entry name" value="PDZ"/>
    <property type="match status" value="1"/>
</dbReference>
<dbReference type="SUPFAM" id="SSF50156">
    <property type="entry name" value="PDZ domain-like"/>
    <property type="match status" value="1"/>
</dbReference>
<dbReference type="SUPFAM" id="SSF50494">
    <property type="entry name" value="Trypsin-like serine proteases"/>
    <property type="match status" value="1"/>
</dbReference>
<dbReference type="PROSITE" id="PS50106">
    <property type="entry name" value="PDZ"/>
    <property type="match status" value="1"/>
</dbReference>
<feature type="chain" id="PRO_0000026939" description="Serine endoprotease DegS">
    <location>
        <begin position="1"/>
        <end position="340"/>
    </location>
</feature>
<feature type="topological domain" description="Cytoplasmic" evidence="1">
    <location>
        <begin position="1"/>
        <end position="4"/>
    </location>
</feature>
<feature type="transmembrane region" description="Helical" evidence="3">
    <location>
        <begin position="5"/>
        <end position="24"/>
    </location>
</feature>
<feature type="topological domain" description="Periplasmic" evidence="1">
    <location>
        <begin position="25"/>
        <end position="340"/>
    </location>
</feature>
<feature type="domain" description="PDZ" evidence="4">
    <location>
        <begin position="251"/>
        <end position="323"/>
    </location>
</feature>
<feature type="active site" description="Charge relay system" evidence="2">
    <location>
        <position position="92"/>
    </location>
</feature>
<feature type="active site" description="Charge relay system" evidence="2">
    <location>
        <position position="122"/>
    </location>
</feature>
<feature type="active site" description="Charge relay system" evidence="2">
    <location>
        <position position="197"/>
    </location>
</feature>
<name>DEGS_HAEIN</name>
<reference key="1">
    <citation type="journal article" date="1995" name="Science">
        <title>Whole-genome random sequencing and assembly of Haemophilus influenzae Rd.</title>
        <authorList>
            <person name="Fleischmann R.D."/>
            <person name="Adams M.D."/>
            <person name="White O."/>
            <person name="Clayton R.A."/>
            <person name="Kirkness E.F."/>
            <person name="Kerlavage A.R."/>
            <person name="Bult C.J."/>
            <person name="Tomb J.-F."/>
            <person name="Dougherty B.A."/>
            <person name="Merrick J.M."/>
            <person name="McKenney K."/>
            <person name="Sutton G.G."/>
            <person name="FitzHugh W."/>
            <person name="Fields C.A."/>
            <person name="Gocayne J.D."/>
            <person name="Scott J.D."/>
            <person name="Shirley R."/>
            <person name="Liu L.-I."/>
            <person name="Glodek A."/>
            <person name="Kelley J.M."/>
            <person name="Weidman J.F."/>
            <person name="Phillips C.A."/>
            <person name="Spriggs T."/>
            <person name="Hedblom E."/>
            <person name="Cotton M.D."/>
            <person name="Utterback T.R."/>
            <person name="Hanna M.C."/>
            <person name="Nguyen D.T."/>
            <person name="Saudek D.M."/>
            <person name="Brandon R.C."/>
            <person name="Fine L.D."/>
            <person name="Fritchman J.L."/>
            <person name="Fuhrmann J.L."/>
            <person name="Geoghagen N.S.M."/>
            <person name="Gnehm C.L."/>
            <person name="McDonald L.A."/>
            <person name="Small K.V."/>
            <person name="Fraser C.M."/>
            <person name="Smith H.O."/>
            <person name="Venter J.C."/>
        </authorList>
    </citation>
    <scope>NUCLEOTIDE SEQUENCE [LARGE SCALE GENOMIC DNA]</scope>
    <source>
        <strain>ATCC 51907 / DSM 11121 / KW20 / Rd</strain>
    </source>
</reference>
<proteinExistence type="inferred from homology"/>